<feature type="chain" id="PRO_0000298705" description="Pyrimidine/purine nucleoside phosphorylase">
    <location>
        <begin position="1"/>
        <end position="108"/>
    </location>
</feature>
<evidence type="ECO:0000255" key="1">
    <source>
        <dbReference type="HAMAP-Rule" id="MF_01537"/>
    </source>
</evidence>
<reference key="1">
    <citation type="journal article" date="2009" name="Environ. Microbiol.">
        <title>The genome of Polaromonas naphthalenivorans strain CJ2, isolated from coal tar-contaminated sediment, reveals physiological and metabolic versatility and evolution through extensive horizontal gene transfer.</title>
        <authorList>
            <person name="Yagi J.M."/>
            <person name="Sims D."/>
            <person name="Brettin T."/>
            <person name="Bruce D."/>
            <person name="Madsen E.L."/>
        </authorList>
    </citation>
    <scope>NUCLEOTIDE SEQUENCE [LARGE SCALE GENOMIC DNA]</scope>
    <source>
        <strain>CJ2</strain>
    </source>
</reference>
<keyword id="KW-0328">Glycosyltransferase</keyword>
<keyword id="KW-1185">Reference proteome</keyword>
<keyword id="KW-0808">Transferase</keyword>
<sequence length="108" mass="11463">MTTEKIDNISVTTQANVYFDGKCISHGITLADGTKKSVGVILPASLTFNTGAAEIMECVAGACEYKLAGSDEWVQSSAGESFSVPGNSKFDIRVAAGFEAYHYICHFA</sequence>
<protein>
    <recommendedName>
        <fullName evidence="1">Pyrimidine/purine nucleoside phosphorylase</fullName>
        <ecNumber evidence="1">2.4.2.1</ecNumber>
        <ecNumber evidence="1">2.4.2.2</ecNumber>
    </recommendedName>
    <alternativeName>
        <fullName evidence="1">Adenosine phosphorylase</fullName>
    </alternativeName>
    <alternativeName>
        <fullName evidence="1">Cytidine phosphorylase</fullName>
    </alternativeName>
    <alternativeName>
        <fullName evidence="1">Guanosine phosphorylase</fullName>
    </alternativeName>
    <alternativeName>
        <fullName evidence="1">Inosine phosphorylase</fullName>
    </alternativeName>
    <alternativeName>
        <fullName evidence="1">Thymidine phosphorylase</fullName>
    </alternativeName>
    <alternativeName>
        <fullName evidence="1">Uridine phosphorylase</fullName>
    </alternativeName>
    <alternativeName>
        <fullName evidence="1">Xanthosine phosphorylase</fullName>
    </alternativeName>
</protein>
<organism>
    <name type="scientific">Polaromonas naphthalenivorans (strain CJ2)</name>
    <dbReference type="NCBI Taxonomy" id="365044"/>
    <lineage>
        <taxon>Bacteria</taxon>
        <taxon>Pseudomonadati</taxon>
        <taxon>Pseudomonadota</taxon>
        <taxon>Betaproteobacteria</taxon>
        <taxon>Burkholderiales</taxon>
        <taxon>Comamonadaceae</taxon>
        <taxon>Polaromonas</taxon>
    </lineage>
</organism>
<proteinExistence type="inferred from homology"/>
<gene>
    <name evidence="1" type="primary">ppnP</name>
    <name type="ordered locus">Pnap_1083</name>
</gene>
<accession>A1VL72</accession>
<dbReference type="EC" id="2.4.2.1" evidence="1"/>
<dbReference type="EC" id="2.4.2.2" evidence="1"/>
<dbReference type="EMBL" id="CP000529">
    <property type="protein sequence ID" value="ABM36400.1"/>
    <property type="molecule type" value="Genomic_DNA"/>
</dbReference>
<dbReference type="RefSeq" id="WP_011800494.1">
    <property type="nucleotide sequence ID" value="NC_008781.1"/>
</dbReference>
<dbReference type="SMR" id="A1VL72"/>
<dbReference type="STRING" id="365044.Pnap_1083"/>
<dbReference type="KEGG" id="pna:Pnap_1083"/>
<dbReference type="eggNOG" id="COG3123">
    <property type="taxonomic scope" value="Bacteria"/>
</dbReference>
<dbReference type="HOGENOM" id="CLU_157874_1_0_4"/>
<dbReference type="OrthoDB" id="9793848at2"/>
<dbReference type="Proteomes" id="UP000000644">
    <property type="component" value="Chromosome"/>
</dbReference>
<dbReference type="GO" id="GO:0005829">
    <property type="term" value="C:cytosol"/>
    <property type="evidence" value="ECO:0007669"/>
    <property type="project" value="TreeGrafter"/>
</dbReference>
<dbReference type="GO" id="GO:0047975">
    <property type="term" value="F:guanosine phosphorylase activity"/>
    <property type="evidence" value="ECO:0007669"/>
    <property type="project" value="UniProtKB-EC"/>
</dbReference>
<dbReference type="GO" id="GO:0004731">
    <property type="term" value="F:purine-nucleoside phosphorylase activity"/>
    <property type="evidence" value="ECO:0007669"/>
    <property type="project" value="UniProtKB-UniRule"/>
</dbReference>
<dbReference type="GO" id="GO:0009032">
    <property type="term" value="F:thymidine phosphorylase activity"/>
    <property type="evidence" value="ECO:0007669"/>
    <property type="project" value="UniProtKB-EC"/>
</dbReference>
<dbReference type="GO" id="GO:0004850">
    <property type="term" value="F:uridine phosphorylase activity"/>
    <property type="evidence" value="ECO:0007669"/>
    <property type="project" value="UniProtKB-EC"/>
</dbReference>
<dbReference type="CDD" id="cd20296">
    <property type="entry name" value="cupin_PpnP-like"/>
    <property type="match status" value="1"/>
</dbReference>
<dbReference type="Gene3D" id="2.60.120.10">
    <property type="entry name" value="Jelly Rolls"/>
    <property type="match status" value="1"/>
</dbReference>
<dbReference type="HAMAP" id="MF_01537">
    <property type="entry name" value="Nucleos_phosphorylase_PpnP"/>
    <property type="match status" value="1"/>
</dbReference>
<dbReference type="InterPro" id="IPR009664">
    <property type="entry name" value="Ppnp"/>
</dbReference>
<dbReference type="InterPro" id="IPR014710">
    <property type="entry name" value="RmlC-like_jellyroll"/>
</dbReference>
<dbReference type="InterPro" id="IPR011051">
    <property type="entry name" value="RmlC_Cupin_sf"/>
</dbReference>
<dbReference type="PANTHER" id="PTHR36540">
    <property type="entry name" value="PYRIMIDINE/PURINE NUCLEOSIDE PHOSPHORYLASE"/>
    <property type="match status" value="1"/>
</dbReference>
<dbReference type="PANTHER" id="PTHR36540:SF1">
    <property type="entry name" value="PYRIMIDINE_PURINE NUCLEOSIDE PHOSPHORYLASE"/>
    <property type="match status" value="1"/>
</dbReference>
<dbReference type="Pfam" id="PF06865">
    <property type="entry name" value="Ppnp"/>
    <property type="match status" value="1"/>
</dbReference>
<dbReference type="SUPFAM" id="SSF51182">
    <property type="entry name" value="RmlC-like cupins"/>
    <property type="match status" value="1"/>
</dbReference>
<comment type="function">
    <text evidence="1">Catalyzes the phosphorolysis of diverse nucleosides, yielding D-ribose 1-phosphate and the respective free bases. Can use uridine, adenosine, guanosine, cytidine, thymidine, inosine and xanthosine as substrates. Also catalyzes the reverse reactions.</text>
</comment>
<comment type="catalytic activity">
    <reaction evidence="1">
        <text>a purine D-ribonucleoside + phosphate = a purine nucleobase + alpha-D-ribose 1-phosphate</text>
        <dbReference type="Rhea" id="RHEA:19805"/>
        <dbReference type="ChEBI" id="CHEBI:26386"/>
        <dbReference type="ChEBI" id="CHEBI:43474"/>
        <dbReference type="ChEBI" id="CHEBI:57720"/>
        <dbReference type="ChEBI" id="CHEBI:142355"/>
        <dbReference type="EC" id="2.4.2.1"/>
    </reaction>
</comment>
<comment type="catalytic activity">
    <reaction evidence="1">
        <text>adenosine + phosphate = alpha-D-ribose 1-phosphate + adenine</text>
        <dbReference type="Rhea" id="RHEA:27642"/>
        <dbReference type="ChEBI" id="CHEBI:16335"/>
        <dbReference type="ChEBI" id="CHEBI:16708"/>
        <dbReference type="ChEBI" id="CHEBI:43474"/>
        <dbReference type="ChEBI" id="CHEBI:57720"/>
        <dbReference type="EC" id="2.4.2.1"/>
    </reaction>
</comment>
<comment type="catalytic activity">
    <reaction evidence="1">
        <text>cytidine + phosphate = cytosine + alpha-D-ribose 1-phosphate</text>
        <dbReference type="Rhea" id="RHEA:52540"/>
        <dbReference type="ChEBI" id="CHEBI:16040"/>
        <dbReference type="ChEBI" id="CHEBI:17562"/>
        <dbReference type="ChEBI" id="CHEBI:43474"/>
        <dbReference type="ChEBI" id="CHEBI:57720"/>
        <dbReference type="EC" id="2.4.2.2"/>
    </reaction>
</comment>
<comment type="catalytic activity">
    <reaction evidence="1">
        <text>guanosine + phosphate = alpha-D-ribose 1-phosphate + guanine</text>
        <dbReference type="Rhea" id="RHEA:13233"/>
        <dbReference type="ChEBI" id="CHEBI:16235"/>
        <dbReference type="ChEBI" id="CHEBI:16750"/>
        <dbReference type="ChEBI" id="CHEBI:43474"/>
        <dbReference type="ChEBI" id="CHEBI:57720"/>
        <dbReference type="EC" id="2.4.2.1"/>
    </reaction>
</comment>
<comment type="catalytic activity">
    <reaction evidence="1">
        <text>inosine + phosphate = alpha-D-ribose 1-phosphate + hypoxanthine</text>
        <dbReference type="Rhea" id="RHEA:27646"/>
        <dbReference type="ChEBI" id="CHEBI:17368"/>
        <dbReference type="ChEBI" id="CHEBI:17596"/>
        <dbReference type="ChEBI" id="CHEBI:43474"/>
        <dbReference type="ChEBI" id="CHEBI:57720"/>
        <dbReference type="EC" id="2.4.2.1"/>
    </reaction>
</comment>
<comment type="catalytic activity">
    <reaction evidence="1">
        <text>thymidine + phosphate = 2-deoxy-alpha-D-ribose 1-phosphate + thymine</text>
        <dbReference type="Rhea" id="RHEA:16037"/>
        <dbReference type="ChEBI" id="CHEBI:17748"/>
        <dbReference type="ChEBI" id="CHEBI:17821"/>
        <dbReference type="ChEBI" id="CHEBI:43474"/>
        <dbReference type="ChEBI" id="CHEBI:57259"/>
        <dbReference type="EC" id="2.4.2.2"/>
    </reaction>
</comment>
<comment type="catalytic activity">
    <reaction evidence="1">
        <text>uridine + phosphate = alpha-D-ribose 1-phosphate + uracil</text>
        <dbReference type="Rhea" id="RHEA:24388"/>
        <dbReference type="ChEBI" id="CHEBI:16704"/>
        <dbReference type="ChEBI" id="CHEBI:17568"/>
        <dbReference type="ChEBI" id="CHEBI:43474"/>
        <dbReference type="ChEBI" id="CHEBI:57720"/>
        <dbReference type="EC" id="2.4.2.2"/>
    </reaction>
</comment>
<comment type="catalytic activity">
    <reaction evidence="1">
        <text>xanthosine + phosphate = alpha-D-ribose 1-phosphate + xanthine</text>
        <dbReference type="Rhea" id="RHEA:27638"/>
        <dbReference type="ChEBI" id="CHEBI:17712"/>
        <dbReference type="ChEBI" id="CHEBI:18107"/>
        <dbReference type="ChEBI" id="CHEBI:43474"/>
        <dbReference type="ChEBI" id="CHEBI:57720"/>
        <dbReference type="EC" id="2.4.2.1"/>
    </reaction>
</comment>
<comment type="similarity">
    <text evidence="1">Belongs to the nucleoside phosphorylase PpnP family.</text>
</comment>
<name>PPNP_POLNA</name>